<protein>
    <recommendedName>
        <fullName>Toxin-like peptide AaF1CA5</fullName>
    </recommendedName>
</protein>
<feature type="signal peptide" evidence="3 7">
    <location>
        <begin position="1"/>
        <end position="22"/>
    </location>
</feature>
<feature type="chain" id="PRO_0000228817" description="Toxin-like peptide AaF1CA5" evidence="7">
    <location>
        <begin position="23"/>
        <end position="81"/>
    </location>
</feature>
<feature type="domain" description="LCN-type CS-alpha/beta" evidence="4">
    <location>
        <begin position="25"/>
        <end position="81"/>
    </location>
</feature>
<feature type="disulfide bond" evidence="4">
    <location>
        <begin position="49"/>
        <end position="68"/>
    </location>
</feature>
<feature type="disulfide bond" evidence="4">
    <location>
        <begin position="53"/>
        <end position="70"/>
    </location>
</feature>
<dbReference type="EMBL" id="AJ781830">
    <property type="protein sequence ID" value="CAH03776.1"/>
    <property type="molecule type" value="mRNA"/>
</dbReference>
<dbReference type="SMR" id="Q4LCT2"/>
<dbReference type="GO" id="GO:0005576">
    <property type="term" value="C:extracellular region"/>
    <property type="evidence" value="ECO:0000250"/>
    <property type="project" value="UniProtKB"/>
</dbReference>
<dbReference type="GO" id="GO:0008200">
    <property type="term" value="F:ion channel inhibitor activity"/>
    <property type="evidence" value="ECO:0000250"/>
    <property type="project" value="UniProtKB"/>
</dbReference>
<dbReference type="GO" id="GO:0019871">
    <property type="term" value="F:sodium channel inhibitor activity"/>
    <property type="evidence" value="ECO:0007669"/>
    <property type="project" value="InterPro"/>
</dbReference>
<dbReference type="GO" id="GO:0090729">
    <property type="term" value="F:toxin activity"/>
    <property type="evidence" value="ECO:0007669"/>
    <property type="project" value="UniProtKB-KW"/>
</dbReference>
<dbReference type="CDD" id="cd23106">
    <property type="entry name" value="neurotoxins_LC_scorpion"/>
    <property type="match status" value="1"/>
</dbReference>
<dbReference type="FunFam" id="3.30.30.10:FF:000008">
    <property type="entry name" value="Toxin-like peptide AaF1CA7"/>
    <property type="match status" value="1"/>
</dbReference>
<dbReference type="Gene3D" id="3.30.30.10">
    <property type="entry name" value="Knottin, scorpion toxin-like"/>
    <property type="match status" value="1"/>
</dbReference>
<dbReference type="InterPro" id="IPR044062">
    <property type="entry name" value="LCN-type_CS_alpha_beta_dom"/>
</dbReference>
<dbReference type="InterPro" id="IPR036574">
    <property type="entry name" value="Scorpion_toxin-like_sf"/>
</dbReference>
<dbReference type="InterPro" id="IPR002061">
    <property type="entry name" value="Scorpion_toxinL/defensin"/>
</dbReference>
<dbReference type="Pfam" id="PF00537">
    <property type="entry name" value="Toxin_3"/>
    <property type="match status" value="1"/>
</dbReference>
<dbReference type="SUPFAM" id="SSF57095">
    <property type="entry name" value="Scorpion toxin-like"/>
    <property type="match status" value="1"/>
</dbReference>
<dbReference type="PROSITE" id="PS51863">
    <property type="entry name" value="LCN_CSAB"/>
    <property type="match status" value="1"/>
</dbReference>
<organism>
    <name type="scientific">Androctonus australis</name>
    <name type="common">Sahara scorpion</name>
    <dbReference type="NCBI Taxonomy" id="6858"/>
    <lineage>
        <taxon>Eukaryota</taxon>
        <taxon>Metazoa</taxon>
        <taxon>Ecdysozoa</taxon>
        <taxon>Arthropoda</taxon>
        <taxon>Chelicerata</taxon>
        <taxon>Arachnida</taxon>
        <taxon>Scorpiones</taxon>
        <taxon>Buthida</taxon>
        <taxon>Buthoidea</taxon>
        <taxon>Buthidae</taxon>
        <taxon>Androctonus</taxon>
    </lineage>
</organism>
<reference evidence="6 7" key="1">
    <citation type="journal article" date="2005" name="Biochem. Biophys. Res. Commun.">
        <title>New 'birtoxin analogs' from Androctonus australis venom.</title>
        <authorList>
            <person name="Martin-Eauclaire M.-F."/>
            <person name="Ceard B."/>
            <person name="Bosmans F."/>
            <person name="Rosso J.-P."/>
            <person name="Tytgat J."/>
            <person name="Bougis P.E."/>
        </authorList>
    </citation>
    <scope>NUCLEOTIDE SEQUENCE [MRNA]</scope>
    <scope>TISSUE SPECIFICITY</scope>
    <source>
        <tissue evidence="5">Venom gland</tissue>
    </source>
</reference>
<evidence type="ECO:0000250" key="1"/>
<evidence type="ECO:0000250" key="2">
    <source>
        <dbReference type="UniProtKB" id="P01493"/>
    </source>
</evidence>
<evidence type="ECO:0000255" key="3"/>
<evidence type="ECO:0000255" key="4">
    <source>
        <dbReference type="PROSITE-ProRule" id="PRU01210"/>
    </source>
</evidence>
<evidence type="ECO:0000269" key="5">
    <source>
    </source>
</evidence>
<evidence type="ECO:0000305" key="6"/>
<evidence type="ECO:0000312" key="7">
    <source>
        <dbReference type="EMBL" id="CAH03776.1"/>
    </source>
</evidence>
<keyword id="KW-1015">Disulfide bond</keyword>
<keyword id="KW-0872">Ion channel impairing toxin</keyword>
<keyword id="KW-0528">Neurotoxin</keyword>
<keyword id="KW-0964">Secreted</keyword>
<keyword id="KW-0732">Signal</keyword>
<keyword id="KW-0800">Toxin</keyword>
<proteinExistence type="evidence at transcript level"/>
<name>TXA5_ANDAU</name>
<sequence>MMKLMLFSIIVILFSLIGSIHGADVPGNYPLDSSDDTYLCAPLGENPFCIKICRKHGVKYGLMLRLPCWCEYFGKIKNVKI</sequence>
<accession>Q4LCT2</accession>
<comment type="function">
    <text evidence="1">Probable neurotoxin that inhibits ion channels.</text>
</comment>
<comment type="subcellular location">
    <subcellularLocation>
        <location evidence="2">Secreted</location>
    </subcellularLocation>
</comment>
<comment type="tissue specificity">
    <text evidence="5">Expressed by the venom gland.</text>
</comment>
<comment type="domain">
    <text evidence="6">Has the structural arrangement of an alpha-helix connected to antiparallel beta-sheets by disulfide bonds (CS-alpha/beta).</text>
</comment>
<comment type="similarity">
    <text evidence="6">Belongs to the long (3 C-C) scorpion toxin superfamily.</text>
</comment>